<dbReference type="EMBL" id="AC004557">
    <property type="protein sequence ID" value="AAF99734.1"/>
    <property type="status" value="ALT_SEQ"/>
    <property type="molecule type" value="Genomic_DNA"/>
</dbReference>
<dbReference type="EMBL" id="CP002684">
    <property type="protein sequence ID" value="AEE30825.1"/>
    <property type="molecule type" value="Genomic_DNA"/>
</dbReference>
<dbReference type="EMBL" id="AF428271">
    <property type="protein sequence ID" value="AAL16103.1"/>
    <property type="molecule type" value="mRNA"/>
</dbReference>
<dbReference type="EMBL" id="AF428449">
    <property type="protein sequence ID" value="AAL16218.1"/>
    <property type="molecule type" value="mRNA"/>
</dbReference>
<dbReference type="EMBL" id="AY037249">
    <property type="protein sequence ID" value="AAK59850.1"/>
    <property type="molecule type" value="mRNA"/>
</dbReference>
<dbReference type="EMBL" id="AY077651">
    <property type="protein sequence ID" value="AAL76129.1"/>
    <property type="molecule type" value="mRNA"/>
</dbReference>
<dbReference type="EMBL" id="AY088522">
    <property type="protein sequence ID" value="AAM66056.1"/>
    <property type="molecule type" value="mRNA"/>
</dbReference>
<dbReference type="RefSeq" id="NP_174060.1">
    <property type="nucleotide sequence ID" value="NM_102503.4"/>
</dbReference>
<dbReference type="SMR" id="Q93VI3"/>
<dbReference type="BioGRID" id="24865">
    <property type="interactions" value="165"/>
</dbReference>
<dbReference type="FunCoup" id="Q93VI3">
    <property type="interactions" value="3177"/>
</dbReference>
<dbReference type="IntAct" id="Q93VI3">
    <property type="interactions" value="11"/>
</dbReference>
<dbReference type="STRING" id="3702.Q93VI3"/>
<dbReference type="PaxDb" id="3702-AT1G27400.1"/>
<dbReference type="ProteomicsDB" id="236203"/>
<dbReference type="EnsemblPlants" id="AT1G27400.1">
    <property type="protein sequence ID" value="AT1G27400.1"/>
    <property type="gene ID" value="AT1G27400"/>
</dbReference>
<dbReference type="GeneID" id="839630"/>
<dbReference type="Gramene" id="AT1G27400.1">
    <property type="protein sequence ID" value="AT1G27400.1"/>
    <property type="gene ID" value="AT1G27400"/>
</dbReference>
<dbReference type="KEGG" id="ath:AT1G27400"/>
<dbReference type="Araport" id="AT1G27400"/>
<dbReference type="TAIR" id="AT1G27400"/>
<dbReference type="eggNOG" id="KOG3353">
    <property type="taxonomic scope" value="Eukaryota"/>
</dbReference>
<dbReference type="HOGENOM" id="CLU_083987_0_1_1"/>
<dbReference type="InParanoid" id="Q93VI3"/>
<dbReference type="OMA" id="IKRMHIR"/>
<dbReference type="OrthoDB" id="1055068at2759"/>
<dbReference type="PhylomeDB" id="Q93VI3"/>
<dbReference type="CD-CODE" id="4299E36E">
    <property type="entry name" value="Nucleolus"/>
</dbReference>
<dbReference type="PRO" id="PR:Q93VI3"/>
<dbReference type="Proteomes" id="UP000006548">
    <property type="component" value="Chromosome 1"/>
</dbReference>
<dbReference type="ExpressionAtlas" id="Q93VI3">
    <property type="expression patterns" value="baseline and differential"/>
</dbReference>
<dbReference type="GO" id="GO:0022625">
    <property type="term" value="C:cytosolic large ribosomal subunit"/>
    <property type="evidence" value="ECO:0007005"/>
    <property type="project" value="TAIR"/>
</dbReference>
<dbReference type="GO" id="GO:0005634">
    <property type="term" value="C:nucleus"/>
    <property type="evidence" value="ECO:0007005"/>
    <property type="project" value="TAIR"/>
</dbReference>
<dbReference type="GO" id="GO:0000325">
    <property type="term" value="C:plant-type vacuole"/>
    <property type="evidence" value="ECO:0007005"/>
    <property type="project" value="TAIR"/>
</dbReference>
<dbReference type="GO" id="GO:0009506">
    <property type="term" value="C:plasmodesma"/>
    <property type="evidence" value="ECO:0007005"/>
    <property type="project" value="TAIR"/>
</dbReference>
<dbReference type="GO" id="GO:0005773">
    <property type="term" value="C:vacuole"/>
    <property type="evidence" value="ECO:0007005"/>
    <property type="project" value="TAIR"/>
</dbReference>
<dbReference type="GO" id="GO:0003729">
    <property type="term" value="F:mRNA binding"/>
    <property type="evidence" value="ECO:0000314"/>
    <property type="project" value="TAIR"/>
</dbReference>
<dbReference type="GO" id="GO:0003735">
    <property type="term" value="F:structural constituent of ribosome"/>
    <property type="evidence" value="ECO:0000314"/>
    <property type="project" value="CAFA"/>
</dbReference>
<dbReference type="GO" id="GO:0006412">
    <property type="term" value="P:translation"/>
    <property type="evidence" value="ECO:0007669"/>
    <property type="project" value="InterPro"/>
</dbReference>
<dbReference type="CDD" id="cd00336">
    <property type="entry name" value="Ribosomal_L22"/>
    <property type="match status" value="1"/>
</dbReference>
<dbReference type="FunFam" id="3.90.470.10:FF:000005">
    <property type="entry name" value="60S ribosomal protein L17"/>
    <property type="match status" value="1"/>
</dbReference>
<dbReference type="Gene3D" id="3.90.470.10">
    <property type="entry name" value="Ribosomal protein L22/L17"/>
    <property type="match status" value="1"/>
</dbReference>
<dbReference type="InterPro" id="IPR001063">
    <property type="entry name" value="Ribosomal_uL22"/>
</dbReference>
<dbReference type="InterPro" id="IPR018260">
    <property type="entry name" value="Ribosomal_uL22_CS"/>
</dbReference>
<dbReference type="InterPro" id="IPR005721">
    <property type="entry name" value="Ribosomal_uL22_euk/arc"/>
</dbReference>
<dbReference type="InterPro" id="IPR036394">
    <property type="entry name" value="Ribosomal_uL22_sf"/>
</dbReference>
<dbReference type="NCBIfam" id="NF003260">
    <property type="entry name" value="PRK04223.1"/>
    <property type="match status" value="1"/>
</dbReference>
<dbReference type="NCBIfam" id="TIGR01038">
    <property type="entry name" value="uL22_arch_euk"/>
    <property type="match status" value="1"/>
</dbReference>
<dbReference type="PANTHER" id="PTHR11593">
    <property type="entry name" value="60S RIBOSOMAL PROTEIN L17"/>
    <property type="match status" value="1"/>
</dbReference>
<dbReference type="PANTHER" id="PTHR11593:SF30">
    <property type="entry name" value="LARGE RIBOSOMAL SUBUNIT PROTEIN UL22Z"/>
    <property type="match status" value="1"/>
</dbReference>
<dbReference type="Pfam" id="PF00237">
    <property type="entry name" value="Ribosomal_L22"/>
    <property type="match status" value="1"/>
</dbReference>
<dbReference type="SUPFAM" id="SSF54843">
    <property type="entry name" value="Ribosomal protein L22"/>
    <property type="match status" value="1"/>
</dbReference>
<dbReference type="PROSITE" id="PS00464">
    <property type="entry name" value="RIBOSOMAL_L22"/>
    <property type="match status" value="1"/>
</dbReference>
<keyword id="KW-1185">Reference proteome</keyword>
<keyword id="KW-0687">Ribonucleoprotein</keyword>
<keyword id="KW-0689">Ribosomal protein</keyword>
<comment type="similarity">
    <text evidence="3">Belongs to the universal ribosomal protein uL22 family.</text>
</comment>
<comment type="sequence caution" evidence="3">
    <conflict type="erroneous gene model prediction">
        <sequence resource="EMBL-CDS" id="AAF99734"/>
    </conflict>
</comment>
<accession>Q93VI3</accession>
<accession>Q9FZJ5</accession>
<evidence type="ECO:0000256" key="1">
    <source>
        <dbReference type="SAM" id="MobiDB-lite"/>
    </source>
</evidence>
<evidence type="ECO:0000303" key="2">
    <source>
    </source>
</evidence>
<evidence type="ECO:0000305" key="3"/>
<proteinExistence type="evidence at transcript level"/>
<sequence>MVKYSQEPDNITKSCKARGADLRVHFKNTRETAHAIRKLPLNKAKRYLEDVIAHKQAIPFTRFCRGVGRTAQAKNRHSNGQGRWPAKSAQFVLDLLKNAESNAEVKGLDVDALFISHIQVNQAAKQRRRTYRAHGRINPYMSNPCHIELILSEKEEPVKKEPETQLAAKSKKGASS</sequence>
<organism>
    <name type="scientific">Arabidopsis thaliana</name>
    <name type="common">Mouse-ear cress</name>
    <dbReference type="NCBI Taxonomy" id="3702"/>
    <lineage>
        <taxon>Eukaryota</taxon>
        <taxon>Viridiplantae</taxon>
        <taxon>Streptophyta</taxon>
        <taxon>Embryophyta</taxon>
        <taxon>Tracheophyta</taxon>
        <taxon>Spermatophyta</taxon>
        <taxon>Magnoliopsida</taxon>
        <taxon>eudicotyledons</taxon>
        <taxon>Gunneridae</taxon>
        <taxon>Pentapetalae</taxon>
        <taxon>rosids</taxon>
        <taxon>malvids</taxon>
        <taxon>Brassicales</taxon>
        <taxon>Brassicaceae</taxon>
        <taxon>Camelineae</taxon>
        <taxon>Arabidopsis</taxon>
    </lineage>
</organism>
<name>RL171_ARATH</name>
<protein>
    <recommendedName>
        <fullName evidence="2">Large ribosomal subunit protein uL22z</fullName>
    </recommendedName>
    <alternativeName>
        <fullName>60S ribosomal protein L17-1</fullName>
    </alternativeName>
</protein>
<feature type="chain" id="PRO_0000125336" description="Large ribosomal subunit protein uL22z">
    <location>
        <begin position="1"/>
        <end position="176"/>
    </location>
</feature>
<feature type="region of interest" description="Disordered" evidence="1">
    <location>
        <begin position="154"/>
        <end position="176"/>
    </location>
</feature>
<feature type="compositionally biased region" description="Basic and acidic residues" evidence="1">
    <location>
        <begin position="154"/>
        <end position="163"/>
    </location>
</feature>
<gene>
    <name type="primary">RPL17A</name>
    <name type="ordered locus">At1g27400</name>
    <name type="ORF">F17L21.19</name>
</gene>
<reference key="1">
    <citation type="journal article" date="2000" name="Nature">
        <title>Sequence and analysis of chromosome 1 of the plant Arabidopsis thaliana.</title>
        <authorList>
            <person name="Theologis A."/>
            <person name="Ecker J.R."/>
            <person name="Palm C.J."/>
            <person name="Federspiel N.A."/>
            <person name="Kaul S."/>
            <person name="White O."/>
            <person name="Alonso J."/>
            <person name="Altafi H."/>
            <person name="Araujo R."/>
            <person name="Bowman C.L."/>
            <person name="Brooks S.Y."/>
            <person name="Buehler E."/>
            <person name="Chan A."/>
            <person name="Chao Q."/>
            <person name="Chen H."/>
            <person name="Cheuk R.F."/>
            <person name="Chin C.W."/>
            <person name="Chung M.K."/>
            <person name="Conn L."/>
            <person name="Conway A.B."/>
            <person name="Conway A.R."/>
            <person name="Creasy T.H."/>
            <person name="Dewar K."/>
            <person name="Dunn P."/>
            <person name="Etgu P."/>
            <person name="Feldblyum T.V."/>
            <person name="Feng J.-D."/>
            <person name="Fong B."/>
            <person name="Fujii C.Y."/>
            <person name="Gill J.E."/>
            <person name="Goldsmith A.D."/>
            <person name="Haas B."/>
            <person name="Hansen N.F."/>
            <person name="Hughes B."/>
            <person name="Huizar L."/>
            <person name="Hunter J.L."/>
            <person name="Jenkins J."/>
            <person name="Johnson-Hopson C."/>
            <person name="Khan S."/>
            <person name="Khaykin E."/>
            <person name="Kim C.J."/>
            <person name="Koo H.L."/>
            <person name="Kremenetskaia I."/>
            <person name="Kurtz D.B."/>
            <person name="Kwan A."/>
            <person name="Lam B."/>
            <person name="Langin-Hooper S."/>
            <person name="Lee A."/>
            <person name="Lee J.M."/>
            <person name="Lenz C.A."/>
            <person name="Li J.H."/>
            <person name="Li Y.-P."/>
            <person name="Lin X."/>
            <person name="Liu S.X."/>
            <person name="Liu Z.A."/>
            <person name="Luros J.S."/>
            <person name="Maiti R."/>
            <person name="Marziali A."/>
            <person name="Militscher J."/>
            <person name="Miranda M."/>
            <person name="Nguyen M."/>
            <person name="Nierman W.C."/>
            <person name="Osborne B.I."/>
            <person name="Pai G."/>
            <person name="Peterson J."/>
            <person name="Pham P.K."/>
            <person name="Rizzo M."/>
            <person name="Rooney T."/>
            <person name="Rowley D."/>
            <person name="Sakano H."/>
            <person name="Salzberg S.L."/>
            <person name="Schwartz J.R."/>
            <person name="Shinn P."/>
            <person name="Southwick A.M."/>
            <person name="Sun H."/>
            <person name="Tallon L.J."/>
            <person name="Tambunga G."/>
            <person name="Toriumi M.J."/>
            <person name="Town C.D."/>
            <person name="Utterback T."/>
            <person name="Van Aken S."/>
            <person name="Vaysberg M."/>
            <person name="Vysotskaia V.S."/>
            <person name="Walker M."/>
            <person name="Wu D."/>
            <person name="Yu G."/>
            <person name="Fraser C.M."/>
            <person name="Venter J.C."/>
            <person name="Davis R.W."/>
        </authorList>
    </citation>
    <scope>NUCLEOTIDE SEQUENCE [LARGE SCALE GENOMIC DNA]</scope>
    <source>
        <strain>cv. Columbia</strain>
    </source>
</reference>
<reference key="2">
    <citation type="journal article" date="2017" name="Plant J.">
        <title>Araport11: a complete reannotation of the Arabidopsis thaliana reference genome.</title>
        <authorList>
            <person name="Cheng C.Y."/>
            <person name="Krishnakumar V."/>
            <person name="Chan A.P."/>
            <person name="Thibaud-Nissen F."/>
            <person name="Schobel S."/>
            <person name="Town C.D."/>
        </authorList>
    </citation>
    <scope>GENOME REANNOTATION</scope>
    <source>
        <strain>cv. Columbia</strain>
    </source>
</reference>
<reference key="3">
    <citation type="journal article" date="2003" name="Science">
        <title>Empirical analysis of transcriptional activity in the Arabidopsis genome.</title>
        <authorList>
            <person name="Yamada K."/>
            <person name="Lim J."/>
            <person name="Dale J.M."/>
            <person name="Chen H."/>
            <person name="Shinn P."/>
            <person name="Palm C.J."/>
            <person name="Southwick A.M."/>
            <person name="Wu H.C."/>
            <person name="Kim C.J."/>
            <person name="Nguyen M."/>
            <person name="Pham P.K."/>
            <person name="Cheuk R.F."/>
            <person name="Karlin-Newmann G."/>
            <person name="Liu S.X."/>
            <person name="Lam B."/>
            <person name="Sakano H."/>
            <person name="Wu T."/>
            <person name="Yu G."/>
            <person name="Miranda M."/>
            <person name="Quach H.L."/>
            <person name="Tripp M."/>
            <person name="Chang C.H."/>
            <person name="Lee J.M."/>
            <person name="Toriumi M.J."/>
            <person name="Chan M.M."/>
            <person name="Tang C.C."/>
            <person name="Onodera C.S."/>
            <person name="Deng J.M."/>
            <person name="Akiyama K."/>
            <person name="Ansari Y."/>
            <person name="Arakawa T."/>
            <person name="Banh J."/>
            <person name="Banno F."/>
            <person name="Bowser L."/>
            <person name="Brooks S.Y."/>
            <person name="Carninci P."/>
            <person name="Chao Q."/>
            <person name="Choy N."/>
            <person name="Enju A."/>
            <person name="Goldsmith A.D."/>
            <person name="Gurjal M."/>
            <person name="Hansen N.F."/>
            <person name="Hayashizaki Y."/>
            <person name="Johnson-Hopson C."/>
            <person name="Hsuan V.W."/>
            <person name="Iida K."/>
            <person name="Karnes M."/>
            <person name="Khan S."/>
            <person name="Koesema E."/>
            <person name="Ishida J."/>
            <person name="Jiang P.X."/>
            <person name="Jones T."/>
            <person name="Kawai J."/>
            <person name="Kamiya A."/>
            <person name="Meyers C."/>
            <person name="Nakajima M."/>
            <person name="Narusaka M."/>
            <person name="Seki M."/>
            <person name="Sakurai T."/>
            <person name="Satou M."/>
            <person name="Tamse R."/>
            <person name="Vaysberg M."/>
            <person name="Wallender E.K."/>
            <person name="Wong C."/>
            <person name="Yamamura Y."/>
            <person name="Yuan S."/>
            <person name="Shinozaki K."/>
            <person name="Davis R.W."/>
            <person name="Theologis A."/>
            <person name="Ecker J.R."/>
        </authorList>
    </citation>
    <scope>NUCLEOTIDE SEQUENCE [LARGE SCALE MRNA]</scope>
    <source>
        <strain>cv. Columbia</strain>
    </source>
</reference>
<reference key="4">
    <citation type="submission" date="2002-03" db="EMBL/GenBank/DDBJ databases">
        <title>Full-length cDNA from Arabidopsis thaliana.</title>
        <authorList>
            <person name="Brover V.V."/>
            <person name="Troukhan M.E."/>
            <person name="Alexandrov N.A."/>
            <person name="Lu Y.-P."/>
            <person name="Flavell R.B."/>
            <person name="Feldmann K.A."/>
        </authorList>
    </citation>
    <scope>NUCLEOTIDE SEQUENCE [LARGE SCALE MRNA]</scope>
</reference>
<reference key="5">
    <citation type="journal article" date="2001" name="Plant Physiol.">
        <title>The organization of cytoplasmic ribosomal protein genes in the Arabidopsis genome.</title>
        <authorList>
            <person name="Barakat A."/>
            <person name="Szick-Miranda K."/>
            <person name="Chang I.-F."/>
            <person name="Guyot R."/>
            <person name="Blanc G."/>
            <person name="Cooke R."/>
            <person name="Delseny M."/>
            <person name="Bailey-Serres J."/>
        </authorList>
    </citation>
    <scope>GENE FAMILY ORGANIZATION</scope>
    <scope>NOMENCLATURE</scope>
</reference>
<reference key="6">
    <citation type="journal article" date="2023" name="Plant Cell">
        <title>An updated nomenclature for plant ribosomal protein genes.</title>
        <authorList>
            <person name="Scarpin M.R."/>
            <person name="Busche M."/>
            <person name="Martinez R.E."/>
            <person name="Harper L.C."/>
            <person name="Reiser L."/>
            <person name="Szakonyi D."/>
            <person name="Merchante C."/>
            <person name="Lan T."/>
            <person name="Xiong W."/>
            <person name="Mo B."/>
            <person name="Tang G."/>
            <person name="Chen X."/>
            <person name="Bailey-Serres J."/>
            <person name="Browning K.S."/>
            <person name="Brunkard J.O."/>
        </authorList>
    </citation>
    <scope>NOMENCLATURE</scope>
</reference>